<sequence length="149" mass="16753">MRAVVQRVSSSSVCVDGDIIGEIGVGFNVLIGISKDDTFEDLKYIKDKIINLRVFHDENDKMNLSLLDIKGEILVISQFTLYGDCRKGRRPNFMEAQGGEEAKKLYEEFLDLLKTSNLKVECGEFGADMKVKINNDGPVTILLDSKRNF</sequence>
<feature type="chain" id="PRO_1000081646" description="D-aminoacyl-tRNA deacylase">
    <location>
        <begin position="1"/>
        <end position="149"/>
    </location>
</feature>
<feature type="short sequence motif" description="Gly-cisPro motif, important for rejection of L-amino acids" evidence="1">
    <location>
        <begin position="137"/>
        <end position="138"/>
    </location>
</feature>
<proteinExistence type="inferred from homology"/>
<name>DTD_CLOB8</name>
<comment type="function">
    <text evidence="1">An aminoacyl-tRNA editing enzyme that deacylates mischarged D-aminoacyl-tRNAs. Also deacylates mischarged glycyl-tRNA(Ala), protecting cells against glycine mischarging by AlaRS. Acts via tRNA-based rather than protein-based catalysis; rejects L-amino acids rather than detecting D-amino acids in the active site. By recycling D-aminoacyl-tRNA to D-amino acids and free tRNA molecules, this enzyme counteracts the toxicity associated with the formation of D-aminoacyl-tRNA entities in vivo and helps enforce protein L-homochirality.</text>
</comment>
<comment type="catalytic activity">
    <reaction evidence="1">
        <text>glycyl-tRNA(Ala) + H2O = tRNA(Ala) + glycine + H(+)</text>
        <dbReference type="Rhea" id="RHEA:53744"/>
        <dbReference type="Rhea" id="RHEA-COMP:9657"/>
        <dbReference type="Rhea" id="RHEA-COMP:13640"/>
        <dbReference type="ChEBI" id="CHEBI:15377"/>
        <dbReference type="ChEBI" id="CHEBI:15378"/>
        <dbReference type="ChEBI" id="CHEBI:57305"/>
        <dbReference type="ChEBI" id="CHEBI:78442"/>
        <dbReference type="ChEBI" id="CHEBI:78522"/>
        <dbReference type="EC" id="3.1.1.96"/>
    </reaction>
</comment>
<comment type="catalytic activity">
    <reaction evidence="1">
        <text>a D-aminoacyl-tRNA + H2O = a tRNA + a D-alpha-amino acid + H(+)</text>
        <dbReference type="Rhea" id="RHEA:13953"/>
        <dbReference type="Rhea" id="RHEA-COMP:10123"/>
        <dbReference type="Rhea" id="RHEA-COMP:10124"/>
        <dbReference type="ChEBI" id="CHEBI:15377"/>
        <dbReference type="ChEBI" id="CHEBI:15378"/>
        <dbReference type="ChEBI" id="CHEBI:59871"/>
        <dbReference type="ChEBI" id="CHEBI:78442"/>
        <dbReference type="ChEBI" id="CHEBI:79333"/>
        <dbReference type="EC" id="3.1.1.96"/>
    </reaction>
</comment>
<comment type="subunit">
    <text evidence="1">Homodimer.</text>
</comment>
<comment type="subcellular location">
    <subcellularLocation>
        <location evidence="1">Cytoplasm</location>
    </subcellularLocation>
</comment>
<comment type="domain">
    <text evidence="1">A Gly-cisPro motif from one monomer fits into the active site of the other monomer to allow specific chiral rejection of L-amino acids.</text>
</comment>
<comment type="similarity">
    <text evidence="1">Belongs to the DTD family.</text>
</comment>
<evidence type="ECO:0000255" key="1">
    <source>
        <dbReference type="HAMAP-Rule" id="MF_00518"/>
    </source>
</evidence>
<keyword id="KW-0963">Cytoplasm</keyword>
<keyword id="KW-0378">Hydrolase</keyword>
<keyword id="KW-0694">RNA-binding</keyword>
<keyword id="KW-0820">tRNA-binding</keyword>
<accession>A6LTN7</accession>
<reference key="1">
    <citation type="submission" date="2007-06" db="EMBL/GenBank/DDBJ databases">
        <title>Complete sequence of Clostridium beijerinckii NCIMB 8052.</title>
        <authorList>
            <consortium name="US DOE Joint Genome Institute"/>
            <person name="Copeland A."/>
            <person name="Lucas S."/>
            <person name="Lapidus A."/>
            <person name="Barry K."/>
            <person name="Detter J.C."/>
            <person name="Glavina del Rio T."/>
            <person name="Hammon N."/>
            <person name="Israni S."/>
            <person name="Dalin E."/>
            <person name="Tice H."/>
            <person name="Pitluck S."/>
            <person name="Sims D."/>
            <person name="Brettin T."/>
            <person name="Bruce D."/>
            <person name="Tapia R."/>
            <person name="Brainard J."/>
            <person name="Schmutz J."/>
            <person name="Larimer F."/>
            <person name="Land M."/>
            <person name="Hauser L."/>
            <person name="Kyrpides N."/>
            <person name="Mikhailova N."/>
            <person name="Bennet G."/>
            <person name="Cann I."/>
            <person name="Chen J.-S."/>
            <person name="Contreras A.L."/>
            <person name="Jones D."/>
            <person name="Kashket E."/>
            <person name="Mitchell W."/>
            <person name="Stoddard S."/>
            <person name="Schwarz W."/>
            <person name="Qureshi N."/>
            <person name="Young M."/>
            <person name="Shi Z."/>
            <person name="Ezeji T."/>
            <person name="White B."/>
            <person name="Blaschek H."/>
            <person name="Richardson P."/>
        </authorList>
    </citation>
    <scope>NUCLEOTIDE SEQUENCE [LARGE SCALE GENOMIC DNA]</scope>
    <source>
        <strain>ATCC 51743 / NCIMB 8052</strain>
    </source>
</reference>
<organism>
    <name type="scientific">Clostridium beijerinckii (strain ATCC 51743 / NCIMB 8052)</name>
    <name type="common">Clostridium acetobutylicum</name>
    <dbReference type="NCBI Taxonomy" id="290402"/>
    <lineage>
        <taxon>Bacteria</taxon>
        <taxon>Bacillati</taxon>
        <taxon>Bacillota</taxon>
        <taxon>Clostridia</taxon>
        <taxon>Eubacteriales</taxon>
        <taxon>Clostridiaceae</taxon>
        <taxon>Clostridium</taxon>
    </lineage>
</organism>
<dbReference type="EC" id="3.1.1.96" evidence="1"/>
<dbReference type="EMBL" id="CP000721">
    <property type="protein sequence ID" value="ABR33717.1"/>
    <property type="molecule type" value="Genomic_DNA"/>
</dbReference>
<dbReference type="RefSeq" id="WP_011968869.1">
    <property type="nucleotide sequence ID" value="NC_009617.1"/>
</dbReference>
<dbReference type="SMR" id="A6LTN7"/>
<dbReference type="GeneID" id="66344509"/>
<dbReference type="KEGG" id="cbe:Cbei_1541"/>
<dbReference type="eggNOG" id="COG1490">
    <property type="taxonomic scope" value="Bacteria"/>
</dbReference>
<dbReference type="HOGENOM" id="CLU_076901_1_0_9"/>
<dbReference type="Proteomes" id="UP000000565">
    <property type="component" value="Chromosome"/>
</dbReference>
<dbReference type="GO" id="GO:0005737">
    <property type="term" value="C:cytoplasm"/>
    <property type="evidence" value="ECO:0007669"/>
    <property type="project" value="UniProtKB-SubCell"/>
</dbReference>
<dbReference type="GO" id="GO:0051500">
    <property type="term" value="F:D-tyrosyl-tRNA(Tyr) deacylase activity"/>
    <property type="evidence" value="ECO:0007669"/>
    <property type="project" value="TreeGrafter"/>
</dbReference>
<dbReference type="GO" id="GO:0106026">
    <property type="term" value="F:Gly-tRNA(Ala) deacylase activity"/>
    <property type="evidence" value="ECO:0007669"/>
    <property type="project" value="UniProtKB-UniRule"/>
</dbReference>
<dbReference type="GO" id="GO:0043908">
    <property type="term" value="F:Ser(Gly)-tRNA(Ala) hydrolase activity"/>
    <property type="evidence" value="ECO:0007669"/>
    <property type="project" value="UniProtKB-UniRule"/>
</dbReference>
<dbReference type="GO" id="GO:0000049">
    <property type="term" value="F:tRNA binding"/>
    <property type="evidence" value="ECO:0007669"/>
    <property type="project" value="UniProtKB-UniRule"/>
</dbReference>
<dbReference type="GO" id="GO:0019478">
    <property type="term" value="P:D-amino acid catabolic process"/>
    <property type="evidence" value="ECO:0007669"/>
    <property type="project" value="UniProtKB-UniRule"/>
</dbReference>
<dbReference type="FunFam" id="3.50.80.10:FF:000001">
    <property type="entry name" value="D-aminoacyl-tRNA deacylase"/>
    <property type="match status" value="1"/>
</dbReference>
<dbReference type="Gene3D" id="3.50.80.10">
    <property type="entry name" value="D-tyrosyl-tRNA(Tyr) deacylase"/>
    <property type="match status" value="1"/>
</dbReference>
<dbReference type="HAMAP" id="MF_00518">
    <property type="entry name" value="Deacylase_Dtd"/>
    <property type="match status" value="1"/>
</dbReference>
<dbReference type="InterPro" id="IPR003732">
    <property type="entry name" value="Daa-tRNA_deacyls_DTD"/>
</dbReference>
<dbReference type="InterPro" id="IPR023509">
    <property type="entry name" value="DTD-like_sf"/>
</dbReference>
<dbReference type="NCBIfam" id="TIGR00256">
    <property type="entry name" value="D-aminoacyl-tRNA deacylase"/>
    <property type="match status" value="1"/>
</dbReference>
<dbReference type="PANTHER" id="PTHR10472:SF5">
    <property type="entry name" value="D-AMINOACYL-TRNA DEACYLASE 1"/>
    <property type="match status" value="1"/>
</dbReference>
<dbReference type="PANTHER" id="PTHR10472">
    <property type="entry name" value="D-TYROSYL-TRNA TYR DEACYLASE"/>
    <property type="match status" value="1"/>
</dbReference>
<dbReference type="Pfam" id="PF02580">
    <property type="entry name" value="Tyr_Deacylase"/>
    <property type="match status" value="1"/>
</dbReference>
<dbReference type="SUPFAM" id="SSF69500">
    <property type="entry name" value="DTD-like"/>
    <property type="match status" value="1"/>
</dbReference>
<protein>
    <recommendedName>
        <fullName evidence="1">D-aminoacyl-tRNA deacylase</fullName>
        <shortName evidence="1">DTD</shortName>
        <ecNumber evidence="1">3.1.1.96</ecNumber>
    </recommendedName>
    <alternativeName>
        <fullName evidence="1">Gly-tRNA(Ala) deacylase</fullName>
    </alternativeName>
</protein>
<gene>
    <name evidence="1" type="primary">dtd</name>
    <name type="ordered locus">Cbei_1541</name>
</gene>